<accession>Q5N4L0</accession>
<name>RSMH_SYNP6</name>
<proteinExistence type="inferred from homology"/>
<feature type="chain" id="PRO_0000108729" description="Ribosomal RNA small subunit methyltransferase H">
    <location>
        <begin position="1"/>
        <end position="296"/>
    </location>
</feature>
<feature type="binding site" evidence="1">
    <location>
        <begin position="41"/>
        <end position="43"/>
    </location>
    <ligand>
        <name>S-adenosyl-L-methionine</name>
        <dbReference type="ChEBI" id="CHEBI:59789"/>
    </ligand>
</feature>
<feature type="binding site" evidence="1">
    <location>
        <position position="60"/>
    </location>
    <ligand>
        <name>S-adenosyl-L-methionine</name>
        <dbReference type="ChEBI" id="CHEBI:59789"/>
    </ligand>
</feature>
<feature type="binding site" evidence="1">
    <location>
        <position position="87"/>
    </location>
    <ligand>
        <name>S-adenosyl-L-methionine</name>
        <dbReference type="ChEBI" id="CHEBI:59789"/>
    </ligand>
</feature>
<feature type="binding site" evidence="1">
    <location>
        <position position="103"/>
    </location>
    <ligand>
        <name>S-adenosyl-L-methionine</name>
        <dbReference type="ChEBI" id="CHEBI:59789"/>
    </ligand>
</feature>
<feature type="binding site" evidence="1">
    <location>
        <position position="110"/>
    </location>
    <ligand>
        <name>S-adenosyl-L-methionine</name>
        <dbReference type="ChEBI" id="CHEBI:59789"/>
    </ligand>
</feature>
<protein>
    <recommendedName>
        <fullName evidence="1">Ribosomal RNA small subunit methyltransferase H</fullName>
        <ecNumber evidence="1">2.1.1.199</ecNumber>
    </recommendedName>
    <alternativeName>
        <fullName evidence="1">16S rRNA m(4)C1402 methyltransferase</fullName>
    </alternativeName>
    <alternativeName>
        <fullName evidence="1">rRNA (cytosine-N(4)-)-methyltransferase RsmH</fullName>
    </alternativeName>
</protein>
<dbReference type="EC" id="2.1.1.199" evidence="1"/>
<dbReference type="EMBL" id="AP008231">
    <property type="protein sequence ID" value="BAD78759.1"/>
    <property type="molecule type" value="Genomic_DNA"/>
</dbReference>
<dbReference type="RefSeq" id="WP_011242881.1">
    <property type="nucleotide sequence ID" value="NZ_CP085785.1"/>
</dbReference>
<dbReference type="SMR" id="Q5N4L0"/>
<dbReference type="GeneID" id="72429826"/>
<dbReference type="KEGG" id="syc:syc0569_d"/>
<dbReference type="eggNOG" id="COG0275">
    <property type="taxonomic scope" value="Bacteria"/>
</dbReference>
<dbReference type="Proteomes" id="UP000001175">
    <property type="component" value="Chromosome"/>
</dbReference>
<dbReference type="GO" id="GO:0005737">
    <property type="term" value="C:cytoplasm"/>
    <property type="evidence" value="ECO:0007669"/>
    <property type="project" value="UniProtKB-SubCell"/>
</dbReference>
<dbReference type="GO" id="GO:0071424">
    <property type="term" value="F:rRNA (cytosine-N4-)-methyltransferase activity"/>
    <property type="evidence" value="ECO:0007669"/>
    <property type="project" value="UniProtKB-UniRule"/>
</dbReference>
<dbReference type="GO" id="GO:0070475">
    <property type="term" value="P:rRNA base methylation"/>
    <property type="evidence" value="ECO:0007669"/>
    <property type="project" value="UniProtKB-UniRule"/>
</dbReference>
<dbReference type="CDD" id="cd02440">
    <property type="entry name" value="AdoMet_MTases"/>
    <property type="match status" value="1"/>
</dbReference>
<dbReference type="Gene3D" id="1.10.150.170">
    <property type="entry name" value="Putative methyltransferase TM0872, insert domain"/>
    <property type="match status" value="1"/>
</dbReference>
<dbReference type="Gene3D" id="3.40.50.150">
    <property type="entry name" value="Vaccinia Virus protein VP39"/>
    <property type="match status" value="1"/>
</dbReference>
<dbReference type="HAMAP" id="MF_01007">
    <property type="entry name" value="16SrRNA_methyltr_H"/>
    <property type="match status" value="1"/>
</dbReference>
<dbReference type="InterPro" id="IPR002903">
    <property type="entry name" value="RsmH"/>
</dbReference>
<dbReference type="InterPro" id="IPR023397">
    <property type="entry name" value="SAM-dep_MeTrfase_MraW_recog"/>
</dbReference>
<dbReference type="InterPro" id="IPR029063">
    <property type="entry name" value="SAM-dependent_MTases_sf"/>
</dbReference>
<dbReference type="NCBIfam" id="TIGR00006">
    <property type="entry name" value="16S rRNA (cytosine(1402)-N(4))-methyltransferase RsmH"/>
    <property type="match status" value="1"/>
</dbReference>
<dbReference type="PANTHER" id="PTHR11265:SF0">
    <property type="entry name" value="12S RRNA N4-METHYLCYTIDINE METHYLTRANSFERASE"/>
    <property type="match status" value="1"/>
</dbReference>
<dbReference type="PANTHER" id="PTHR11265">
    <property type="entry name" value="S-ADENOSYL-METHYLTRANSFERASE MRAW"/>
    <property type="match status" value="1"/>
</dbReference>
<dbReference type="Pfam" id="PF01795">
    <property type="entry name" value="Methyltransf_5"/>
    <property type="match status" value="1"/>
</dbReference>
<dbReference type="PIRSF" id="PIRSF004486">
    <property type="entry name" value="MraW"/>
    <property type="match status" value="1"/>
</dbReference>
<dbReference type="SUPFAM" id="SSF81799">
    <property type="entry name" value="Putative methyltransferase TM0872, insert domain"/>
    <property type="match status" value="1"/>
</dbReference>
<dbReference type="SUPFAM" id="SSF53335">
    <property type="entry name" value="S-adenosyl-L-methionine-dependent methyltransferases"/>
    <property type="match status" value="1"/>
</dbReference>
<evidence type="ECO:0000255" key="1">
    <source>
        <dbReference type="HAMAP-Rule" id="MF_01007"/>
    </source>
</evidence>
<organism>
    <name type="scientific">Synechococcus sp. (strain ATCC 27144 / PCC 6301 / SAUG 1402/1)</name>
    <name type="common">Anacystis nidulans</name>
    <dbReference type="NCBI Taxonomy" id="269084"/>
    <lineage>
        <taxon>Bacteria</taxon>
        <taxon>Bacillati</taxon>
        <taxon>Cyanobacteriota</taxon>
        <taxon>Cyanophyceae</taxon>
        <taxon>Synechococcales</taxon>
        <taxon>Synechococcaceae</taxon>
        <taxon>Synechococcus</taxon>
    </lineage>
</organism>
<sequence>MLADSSQPSSFHHVTVLQRELVEGLLPDRGGWFLDATLGGGGHSELLLSEWPNTQVIGLDRDPAAIAASQTRLQLYSDRVQFQHVNFANYQPGDRRFQGIMADLGVSSPQLDEAERGFSFRQDAPLDMRMDPTAELTAAAIVNEWDETDLANLIYQYGEERLSRRIARRIVEQRPFERTLELSEAIAGAVPRSYRYGRIHPATRTFQALRIAVNGELDALQTFLDRAPDWLAPGGRIALISFHSLEDRIIKHALRGDDRLTVITRKPLLPSEAEIESNPRSRSAKLRIAERVLPES</sequence>
<reference key="1">
    <citation type="journal article" date="2007" name="Photosyn. Res.">
        <title>Complete nucleotide sequence of the freshwater unicellular cyanobacterium Synechococcus elongatus PCC 6301 chromosome: gene content and organization.</title>
        <authorList>
            <person name="Sugita C."/>
            <person name="Ogata K."/>
            <person name="Shikata M."/>
            <person name="Jikuya H."/>
            <person name="Takano J."/>
            <person name="Furumichi M."/>
            <person name="Kanehisa M."/>
            <person name="Omata T."/>
            <person name="Sugiura M."/>
            <person name="Sugita M."/>
        </authorList>
    </citation>
    <scope>NUCLEOTIDE SEQUENCE [LARGE SCALE GENOMIC DNA]</scope>
    <source>
        <strain>ATCC 27144 / PCC 6301 / SAUG 1402/1</strain>
    </source>
</reference>
<gene>
    <name evidence="1" type="primary">rsmH</name>
    <name type="synonym">mraW</name>
    <name type="ordered locus">syc0569_d</name>
</gene>
<keyword id="KW-0963">Cytoplasm</keyword>
<keyword id="KW-0489">Methyltransferase</keyword>
<keyword id="KW-0698">rRNA processing</keyword>
<keyword id="KW-0949">S-adenosyl-L-methionine</keyword>
<keyword id="KW-0808">Transferase</keyword>
<comment type="function">
    <text evidence="1">Specifically methylates the N4 position of cytidine in position 1402 (C1402) of 16S rRNA.</text>
</comment>
<comment type="catalytic activity">
    <reaction evidence="1">
        <text>cytidine(1402) in 16S rRNA + S-adenosyl-L-methionine = N(4)-methylcytidine(1402) in 16S rRNA + S-adenosyl-L-homocysteine + H(+)</text>
        <dbReference type="Rhea" id="RHEA:42928"/>
        <dbReference type="Rhea" id="RHEA-COMP:10286"/>
        <dbReference type="Rhea" id="RHEA-COMP:10287"/>
        <dbReference type="ChEBI" id="CHEBI:15378"/>
        <dbReference type="ChEBI" id="CHEBI:57856"/>
        <dbReference type="ChEBI" id="CHEBI:59789"/>
        <dbReference type="ChEBI" id="CHEBI:74506"/>
        <dbReference type="ChEBI" id="CHEBI:82748"/>
        <dbReference type="EC" id="2.1.1.199"/>
    </reaction>
</comment>
<comment type="subcellular location">
    <subcellularLocation>
        <location evidence="1">Cytoplasm</location>
    </subcellularLocation>
</comment>
<comment type="similarity">
    <text evidence="1">Belongs to the methyltransferase superfamily. RsmH family.</text>
</comment>